<accession>Q2YXE4</accession>
<keyword id="KW-0963">Cytoplasm</keyword>
<keyword id="KW-0238">DNA-binding</keyword>
<keyword id="KW-0677">Repeat</keyword>
<keyword id="KW-0804">Transcription</keyword>
<keyword id="KW-0805">Transcription regulation</keyword>
<name>MRAZ_STAAB</name>
<organism>
    <name type="scientific">Staphylococcus aureus (strain bovine RF122 / ET3-1)</name>
    <dbReference type="NCBI Taxonomy" id="273036"/>
    <lineage>
        <taxon>Bacteria</taxon>
        <taxon>Bacillati</taxon>
        <taxon>Bacillota</taxon>
        <taxon>Bacilli</taxon>
        <taxon>Bacillales</taxon>
        <taxon>Staphylococcaceae</taxon>
        <taxon>Staphylococcus</taxon>
    </lineage>
</organism>
<dbReference type="EMBL" id="AJ938182">
    <property type="protein sequence ID" value="CAI80730.1"/>
    <property type="molecule type" value="Genomic_DNA"/>
</dbReference>
<dbReference type="RefSeq" id="WP_000480800.1">
    <property type="nucleotide sequence ID" value="NC_007622.1"/>
</dbReference>
<dbReference type="SMR" id="Q2YXE4"/>
<dbReference type="GeneID" id="66839371"/>
<dbReference type="KEGG" id="sab:SAB1042"/>
<dbReference type="HOGENOM" id="CLU_107907_0_5_9"/>
<dbReference type="GO" id="GO:0005737">
    <property type="term" value="C:cytoplasm"/>
    <property type="evidence" value="ECO:0007669"/>
    <property type="project" value="UniProtKB-UniRule"/>
</dbReference>
<dbReference type="GO" id="GO:0009295">
    <property type="term" value="C:nucleoid"/>
    <property type="evidence" value="ECO:0007669"/>
    <property type="project" value="UniProtKB-SubCell"/>
</dbReference>
<dbReference type="GO" id="GO:0003700">
    <property type="term" value="F:DNA-binding transcription factor activity"/>
    <property type="evidence" value="ECO:0007669"/>
    <property type="project" value="UniProtKB-UniRule"/>
</dbReference>
<dbReference type="GO" id="GO:0000976">
    <property type="term" value="F:transcription cis-regulatory region binding"/>
    <property type="evidence" value="ECO:0007669"/>
    <property type="project" value="TreeGrafter"/>
</dbReference>
<dbReference type="GO" id="GO:2000143">
    <property type="term" value="P:negative regulation of DNA-templated transcription initiation"/>
    <property type="evidence" value="ECO:0007669"/>
    <property type="project" value="TreeGrafter"/>
</dbReference>
<dbReference type="CDD" id="cd16321">
    <property type="entry name" value="MraZ_C"/>
    <property type="match status" value="1"/>
</dbReference>
<dbReference type="CDD" id="cd16320">
    <property type="entry name" value="MraZ_N"/>
    <property type="match status" value="1"/>
</dbReference>
<dbReference type="FunFam" id="3.40.1550.20:FF:000002">
    <property type="entry name" value="Transcriptional regulator MraZ"/>
    <property type="match status" value="1"/>
</dbReference>
<dbReference type="Gene3D" id="3.40.1550.20">
    <property type="entry name" value="Transcriptional regulator MraZ domain"/>
    <property type="match status" value="1"/>
</dbReference>
<dbReference type="HAMAP" id="MF_01008">
    <property type="entry name" value="MraZ"/>
    <property type="match status" value="1"/>
</dbReference>
<dbReference type="InterPro" id="IPR003444">
    <property type="entry name" value="MraZ"/>
</dbReference>
<dbReference type="InterPro" id="IPR035644">
    <property type="entry name" value="MraZ_C"/>
</dbReference>
<dbReference type="InterPro" id="IPR020603">
    <property type="entry name" value="MraZ_dom"/>
</dbReference>
<dbReference type="InterPro" id="IPR035642">
    <property type="entry name" value="MraZ_N"/>
</dbReference>
<dbReference type="InterPro" id="IPR038619">
    <property type="entry name" value="MraZ_sf"/>
</dbReference>
<dbReference type="InterPro" id="IPR007159">
    <property type="entry name" value="SpoVT-AbrB_dom"/>
</dbReference>
<dbReference type="InterPro" id="IPR037914">
    <property type="entry name" value="SpoVT-AbrB_sf"/>
</dbReference>
<dbReference type="NCBIfam" id="TIGR00242">
    <property type="entry name" value="division/cell wall cluster transcriptional repressor MraZ"/>
    <property type="match status" value="1"/>
</dbReference>
<dbReference type="PANTHER" id="PTHR34701">
    <property type="entry name" value="TRANSCRIPTIONAL REGULATOR MRAZ"/>
    <property type="match status" value="1"/>
</dbReference>
<dbReference type="PANTHER" id="PTHR34701:SF1">
    <property type="entry name" value="TRANSCRIPTIONAL REGULATOR MRAZ"/>
    <property type="match status" value="1"/>
</dbReference>
<dbReference type="Pfam" id="PF02381">
    <property type="entry name" value="MraZ"/>
    <property type="match status" value="2"/>
</dbReference>
<dbReference type="SUPFAM" id="SSF89447">
    <property type="entry name" value="AbrB/MazE/MraZ-like"/>
    <property type="match status" value="1"/>
</dbReference>
<dbReference type="PROSITE" id="PS51740">
    <property type="entry name" value="SPOVT_ABRB"/>
    <property type="match status" value="2"/>
</dbReference>
<protein>
    <recommendedName>
        <fullName>Transcriptional regulator MraZ</fullName>
    </recommendedName>
</protein>
<proteinExistence type="inferred from homology"/>
<sequence>MFMGEYDHQLDTKGRMIIPSKFRYDLNERFIITRGLDKCLFGYTLDEWQQIEEKMKTLPMTKKDARKFMRMFFSGAVEVELDKQGRINIPQNLRKYANLTKECTVIGVSNRIEIWDRETWNDFYEESEESFEDIAEDLIDFDF</sequence>
<gene>
    <name evidence="1" type="primary">mraZ</name>
    <name type="ordered locus">SAB1042</name>
</gene>
<reference key="1">
    <citation type="journal article" date="2007" name="PLoS ONE">
        <title>Molecular correlates of host specialization in Staphylococcus aureus.</title>
        <authorList>
            <person name="Herron-Olson L."/>
            <person name="Fitzgerald J.R."/>
            <person name="Musser J.M."/>
            <person name="Kapur V."/>
        </authorList>
    </citation>
    <scope>NUCLEOTIDE SEQUENCE [LARGE SCALE GENOMIC DNA]</scope>
    <source>
        <strain>bovine RF122 / ET3-1</strain>
    </source>
</reference>
<evidence type="ECO:0000255" key="1">
    <source>
        <dbReference type="HAMAP-Rule" id="MF_01008"/>
    </source>
</evidence>
<evidence type="ECO:0000255" key="2">
    <source>
        <dbReference type="PROSITE-ProRule" id="PRU01076"/>
    </source>
</evidence>
<feature type="chain" id="PRO_0000230111" description="Transcriptional regulator MraZ">
    <location>
        <begin position="1"/>
        <end position="143"/>
    </location>
</feature>
<feature type="domain" description="SpoVT-AbrB 1" evidence="2">
    <location>
        <begin position="5"/>
        <end position="47"/>
    </location>
</feature>
<feature type="domain" description="SpoVT-AbrB 2" evidence="2">
    <location>
        <begin position="76"/>
        <end position="119"/>
    </location>
</feature>
<comment type="subunit">
    <text evidence="1">Forms oligomers.</text>
</comment>
<comment type="subcellular location">
    <subcellularLocation>
        <location evidence="1">Cytoplasm</location>
        <location evidence="1">Nucleoid</location>
    </subcellularLocation>
</comment>
<comment type="similarity">
    <text evidence="1">Belongs to the MraZ family.</text>
</comment>